<keyword id="KW-0963">Cytoplasm</keyword>
<keyword id="KW-0238">DNA-binding</keyword>
<evidence type="ECO:0000255" key="1">
    <source>
        <dbReference type="HAMAP-Rule" id="MF_00274"/>
    </source>
</evidence>
<evidence type="ECO:0000256" key="2">
    <source>
        <dbReference type="SAM" id="MobiDB-lite"/>
    </source>
</evidence>
<reference key="1">
    <citation type="submission" date="2007-06" db="EMBL/GenBank/DDBJ databases">
        <title>Complete sequence of Marinomonas sp. MWYL1.</title>
        <authorList>
            <consortium name="US DOE Joint Genome Institute"/>
            <person name="Copeland A."/>
            <person name="Lucas S."/>
            <person name="Lapidus A."/>
            <person name="Barry K."/>
            <person name="Glavina del Rio T."/>
            <person name="Dalin E."/>
            <person name="Tice H."/>
            <person name="Pitluck S."/>
            <person name="Kiss H."/>
            <person name="Brettin T."/>
            <person name="Bruce D."/>
            <person name="Detter J.C."/>
            <person name="Han C."/>
            <person name="Schmutz J."/>
            <person name="Larimer F."/>
            <person name="Land M."/>
            <person name="Hauser L."/>
            <person name="Kyrpides N."/>
            <person name="Kim E."/>
            <person name="Johnston A.W.B."/>
            <person name="Todd J.D."/>
            <person name="Rogers R."/>
            <person name="Wexler M."/>
            <person name="Bond P.L."/>
            <person name="Li Y."/>
            <person name="Richardson P."/>
        </authorList>
    </citation>
    <scope>NUCLEOTIDE SEQUENCE [LARGE SCALE GENOMIC DNA]</scope>
    <source>
        <strain>MWYL1</strain>
    </source>
</reference>
<gene>
    <name type="ordered locus">Mmwyl1_2533</name>
</gene>
<feature type="chain" id="PRO_1000078761" description="Nucleoid-associated protein Mmwyl1_2533">
    <location>
        <begin position="1"/>
        <end position="108"/>
    </location>
</feature>
<feature type="region of interest" description="Disordered" evidence="2">
    <location>
        <begin position="1"/>
        <end position="22"/>
    </location>
</feature>
<feature type="compositionally biased region" description="Polar residues" evidence="2">
    <location>
        <begin position="11"/>
        <end position="22"/>
    </location>
</feature>
<accession>A6VYC3</accession>
<organism>
    <name type="scientific">Marinomonas sp. (strain MWYL1)</name>
    <dbReference type="NCBI Taxonomy" id="400668"/>
    <lineage>
        <taxon>Bacteria</taxon>
        <taxon>Pseudomonadati</taxon>
        <taxon>Pseudomonadota</taxon>
        <taxon>Gammaproteobacteria</taxon>
        <taxon>Oceanospirillales</taxon>
        <taxon>Oceanospirillaceae</taxon>
        <taxon>Marinomonas</taxon>
    </lineage>
</organism>
<proteinExistence type="inferred from homology"/>
<comment type="function">
    <text evidence="1">Binds to DNA and alters its conformation. May be involved in regulation of gene expression, nucleoid organization and DNA protection.</text>
</comment>
<comment type="subunit">
    <text evidence="1">Homodimer.</text>
</comment>
<comment type="subcellular location">
    <subcellularLocation>
        <location evidence="1">Cytoplasm</location>
        <location evidence="1">Nucleoid</location>
    </subcellularLocation>
</comment>
<comment type="similarity">
    <text evidence="1">Belongs to the YbaB/EbfC family.</text>
</comment>
<dbReference type="EMBL" id="CP000749">
    <property type="protein sequence ID" value="ABR71452.1"/>
    <property type="molecule type" value="Genomic_DNA"/>
</dbReference>
<dbReference type="SMR" id="A6VYC3"/>
<dbReference type="STRING" id="400668.Mmwyl1_2533"/>
<dbReference type="KEGG" id="mmw:Mmwyl1_2533"/>
<dbReference type="eggNOG" id="COG0718">
    <property type="taxonomic scope" value="Bacteria"/>
</dbReference>
<dbReference type="HOGENOM" id="CLU_140930_0_0_6"/>
<dbReference type="OrthoDB" id="9808738at2"/>
<dbReference type="GO" id="GO:0043590">
    <property type="term" value="C:bacterial nucleoid"/>
    <property type="evidence" value="ECO:0007669"/>
    <property type="project" value="UniProtKB-UniRule"/>
</dbReference>
<dbReference type="GO" id="GO:0005829">
    <property type="term" value="C:cytosol"/>
    <property type="evidence" value="ECO:0007669"/>
    <property type="project" value="TreeGrafter"/>
</dbReference>
<dbReference type="GO" id="GO:0003677">
    <property type="term" value="F:DNA binding"/>
    <property type="evidence" value="ECO:0007669"/>
    <property type="project" value="UniProtKB-UniRule"/>
</dbReference>
<dbReference type="FunFam" id="3.30.1310.10:FF:000001">
    <property type="entry name" value="Nucleoid-associated protein YbaB"/>
    <property type="match status" value="1"/>
</dbReference>
<dbReference type="Gene3D" id="3.30.1310.10">
    <property type="entry name" value="Nucleoid-associated protein YbaB-like domain"/>
    <property type="match status" value="1"/>
</dbReference>
<dbReference type="HAMAP" id="MF_00274">
    <property type="entry name" value="DNA_YbaB_EbfC"/>
    <property type="match status" value="1"/>
</dbReference>
<dbReference type="InterPro" id="IPR036894">
    <property type="entry name" value="YbaB-like_sf"/>
</dbReference>
<dbReference type="InterPro" id="IPR004401">
    <property type="entry name" value="YbaB/EbfC"/>
</dbReference>
<dbReference type="NCBIfam" id="TIGR00103">
    <property type="entry name" value="DNA_YbaB_EbfC"/>
    <property type="match status" value="1"/>
</dbReference>
<dbReference type="PANTHER" id="PTHR33449">
    <property type="entry name" value="NUCLEOID-ASSOCIATED PROTEIN YBAB"/>
    <property type="match status" value="1"/>
</dbReference>
<dbReference type="PANTHER" id="PTHR33449:SF1">
    <property type="entry name" value="NUCLEOID-ASSOCIATED PROTEIN YBAB"/>
    <property type="match status" value="1"/>
</dbReference>
<dbReference type="Pfam" id="PF02575">
    <property type="entry name" value="YbaB_DNA_bd"/>
    <property type="match status" value="1"/>
</dbReference>
<dbReference type="PIRSF" id="PIRSF004555">
    <property type="entry name" value="UCP004555"/>
    <property type="match status" value="1"/>
</dbReference>
<dbReference type="SUPFAM" id="SSF82607">
    <property type="entry name" value="YbaB-like"/>
    <property type="match status" value="1"/>
</dbReference>
<sequence>MFKGGMGNMMRQAQQMQENMQKAQEEIANMEVEGQAGAGLVKILMTGRHDVKRVSIDDSLFGDDKEMLEDLIAAAVNDAVRNIEVTQKEKMAAATAGMSLPPGFKMPF</sequence>
<name>Y2533_MARMS</name>
<protein>
    <recommendedName>
        <fullName evidence="1">Nucleoid-associated protein Mmwyl1_2533</fullName>
    </recommendedName>
</protein>